<accession>O00370</accession>
<comment type="function">
    <text evidence="3 5 7 8 9 10 11">Has reverse transcriptase activity required for target-primed reverse transcription of the LINE-1 element mRNA, a crucial step in LINE-1 retrotransposition (PubMed:38096901, PubMed:38096902, PubMed:7516468, PubMed:9140393). Selectively binds and reversely transcribes RNA with a poly(A) tail consisting of at least 20 adenosines (PubMed:38096901). Also has endonuclease activity that allows the introduction of nicks in the chromosomal target DNA (PubMed:17626046, PubMed:34554261, PubMed:38096901, PubMed:38096902, PubMed:8945517). Cleaves DNA in AT-rich regions between a 5' stretch of purines and a 3' stretch of pyrimidines, corresponding to the sites of LINE-1 integration in the genome (PubMed:8945517). Conformational properties of the target DNA sequence rather than specific nucleotides are key determinants of the ORF2p capacity for sequence-specific DNA recognition (PubMed:17626046, PubMed:34554261). Unlike related endonucleases, does not bend the DNA helix but causes compression near the cleavage site (PubMed:34554261).</text>
</comment>
<comment type="catalytic activity">
    <reaction evidence="2 7 8 11">
        <text>DNA(n) + a 2'-deoxyribonucleoside 5'-triphosphate = DNA(n+1) + diphosphate</text>
        <dbReference type="Rhea" id="RHEA:22508"/>
        <dbReference type="Rhea" id="RHEA-COMP:17339"/>
        <dbReference type="Rhea" id="RHEA-COMP:17340"/>
        <dbReference type="ChEBI" id="CHEBI:33019"/>
        <dbReference type="ChEBI" id="CHEBI:61560"/>
        <dbReference type="ChEBI" id="CHEBI:173112"/>
        <dbReference type="EC" id="2.7.7.49"/>
    </reaction>
</comment>
<comment type="subunit">
    <text evidence="1">Interacts with MOV10.</text>
</comment>
<comment type="domain">
    <text evidence="4 7 8">The FADD motif is located within the catalytic core and is essential for reverse transcriptase activity (PubMed:38096901, PubMed:38096902). The C-terminal segment (CTS) binds to RNA with high affinity in the nanomolar range but without apparent sequence specificity (PubMed:24251107).</text>
</comment>
<comment type="domain">
    <text evidence="3">The size and flexibility of the betaB6-betaB5 hairpin loop at residues 191-205 are crucial for activity. Variation of the loop sequence results in an altered DNA nicking profile including novel sites.</text>
</comment>
<comment type="miscellaneous">
    <text>Long interspersed element-1/LINE-1/L1 retrotransposons are present in more than 500'000 full (6 kb) or truncated copies in the human genome. Most of them are inactive but one estimate is that 80 to 100 of those elements could be transcribed, translated and active in any individual. An active LINE-1 encodes for 2 proteins translated from a single RNA containing two non-overlapping ORFs, ORF1 and ORF2. ORF2p is described in this entry as a representative of all ORF2p potentially expressed by active elements. ORF1p is described in the related entry AC Q9UN81.</text>
</comment>
<comment type="miscellaneous">
    <text evidence="6">Insertions of LINE-1 (L1) retrotransposons can occur frequently at CRISPR/Cas9 editing sites. The reverse transcriptase activity of ORF2p mediates L1 insertions into CRISPR/Cas9-initiated double-strand breaks (DSB). De novo L1 insertions are rare during genome editing by prime editors and by cytidine or adenine base editors, consistent with their reduced DSB formation.</text>
</comment>
<protein>
    <recommendedName>
        <fullName>LINE-1 retrotransposable element ORF2 protein</fullName>
        <shortName evidence="12 13">ORF2p</shortName>
    </recommendedName>
    <domain>
        <recommendedName>
            <fullName>Reverse transcriptase</fullName>
            <ecNumber evidence="7 8 9 11">2.7.7.49</ecNumber>
        </recommendedName>
    </domain>
    <domain>
        <recommendedName>
            <fullName>Endonuclease</fullName>
            <ecNumber evidence="3 5 7 8 10">3.1.21.-</ecNumber>
        </recommendedName>
    </domain>
</protein>
<feature type="chain" id="PRO_0000425082" description="LINE-1 retrotransposable element ORF2 protein">
    <location>
        <begin position="1"/>
        <end position="1275"/>
    </location>
</feature>
<feature type="domain" description="Reverse transcriptase" evidence="2 7 8">
    <location>
        <begin position="498"/>
        <end position="773"/>
    </location>
</feature>
<feature type="domain" description="DUF1725">
    <location>
        <begin position="1242"/>
        <end position="1260"/>
    </location>
</feature>
<feature type="region of interest" description="Endonuclease activity" evidence="7 8">
    <location>
        <begin position="1"/>
        <end position="239"/>
    </location>
</feature>
<feature type="region of interest" description="Carboxy-terminal segment; binds RNA" evidence="4 7 8">
    <location>
        <begin position="1096"/>
        <end position="1275"/>
    </location>
</feature>
<feature type="short sequence motif" description="FADD motif" evidence="7 8">
    <location>
        <begin position="700"/>
        <end position="703"/>
    </location>
</feature>
<feature type="binding site" evidence="3 5 16 17">
    <location>
        <position position="43"/>
    </location>
    <ligand>
        <name>Mg(2+)</name>
        <dbReference type="ChEBI" id="CHEBI:18420"/>
        <label>2</label>
        <note>catalytic</note>
    </ligand>
</feature>
<feature type="binding site" evidence="7 8 20 21 23">
    <location>
        <position position="519"/>
    </location>
    <ligand>
        <name>dTTP</name>
        <dbReference type="ChEBI" id="CHEBI:37568"/>
        <note>substrate</note>
    </ligand>
</feature>
<feature type="binding site" evidence="7 23">
    <location>
        <position position="522"/>
    </location>
    <ligand>
        <name>dTTP</name>
        <dbReference type="ChEBI" id="CHEBI:37568"/>
        <note>substrate</note>
    </ligand>
</feature>
<feature type="binding site" evidence="7 8 20 21 23">
    <location>
        <position position="531"/>
    </location>
    <ligand>
        <name>dTTP</name>
        <dbReference type="ChEBI" id="CHEBI:37568"/>
        <note>substrate</note>
    </ligand>
</feature>
<feature type="binding site" evidence="8 20">
    <location>
        <position position="556"/>
    </location>
    <ligand>
        <name>Mg(2+)</name>
        <dbReference type="ChEBI" id="CHEBI:18420"/>
        <label>3</label>
    </ligand>
</feature>
<feature type="binding site" evidence="8 20">
    <location>
        <position position="559"/>
    </location>
    <ligand>
        <name>Mg(2+)</name>
        <dbReference type="ChEBI" id="CHEBI:18420"/>
        <label>3</label>
    </ligand>
</feature>
<feature type="binding site" evidence="8 20">
    <location>
        <position position="560"/>
    </location>
    <ligand>
        <name>Mg(2+)</name>
        <dbReference type="ChEBI" id="CHEBI:18420"/>
        <label>3</label>
    </ligand>
</feature>
<feature type="binding site" evidence="8 20">
    <location>
        <position position="561"/>
    </location>
    <ligand>
        <name>Mg(2+)</name>
        <dbReference type="ChEBI" id="CHEBI:18420"/>
        <label>3</label>
    </ligand>
</feature>
<feature type="binding site" evidence="7 8 20 23">
    <location>
        <position position="600"/>
    </location>
    <ligand>
        <name>dTTP</name>
        <dbReference type="ChEBI" id="CHEBI:37568"/>
        <note>substrate</note>
    </ligand>
</feature>
<feature type="binding site" evidence="8 20 21">
    <location>
        <position position="600"/>
    </location>
    <ligand>
        <name>Mg(2+)</name>
        <dbReference type="ChEBI" id="CHEBI:18420"/>
        <label>1</label>
        <note>catalytic</note>
    </ligand>
</feature>
<feature type="binding site" evidence="7 8 20 21 23">
    <location>
        <position position="601"/>
    </location>
    <ligand>
        <name>dTTP</name>
        <dbReference type="ChEBI" id="CHEBI:37568"/>
        <note>substrate</note>
    </ligand>
</feature>
<feature type="binding site" evidence="7 8 20 21 23">
    <location>
        <position position="602"/>
    </location>
    <ligand>
        <name>dTTP</name>
        <dbReference type="ChEBI" id="CHEBI:37568"/>
        <note>substrate</note>
    </ligand>
</feature>
<feature type="binding site" evidence="7 8 20 21 23">
    <location>
        <position position="603"/>
    </location>
    <ligand>
        <name>dTTP</name>
        <dbReference type="ChEBI" id="CHEBI:37568"/>
        <note>substrate</note>
    </ligand>
</feature>
<feature type="binding site" evidence="7 8 20 23">
    <location>
        <position position="604"/>
    </location>
    <ligand>
        <name>dTTP</name>
        <dbReference type="ChEBI" id="CHEBI:37568"/>
        <note>substrate</note>
    </ligand>
</feature>
<feature type="binding site" evidence="7 8 20 21 23">
    <location>
        <position position="605"/>
    </location>
    <ligand>
        <name>dTTP</name>
        <dbReference type="ChEBI" id="CHEBI:37568"/>
        <note>substrate</note>
    </ligand>
</feature>
<feature type="binding site" evidence="7 8 20 21 23">
    <location>
        <position position="659"/>
    </location>
    <ligand>
        <name>dTTP</name>
        <dbReference type="ChEBI" id="CHEBI:37568"/>
        <note>substrate</note>
    </ligand>
</feature>
<feature type="binding site" evidence="7 8 20 21 23">
    <location>
        <position position="702"/>
    </location>
    <ligand>
        <name>dTTP</name>
        <dbReference type="ChEBI" id="CHEBI:37568"/>
        <note>substrate</note>
    </ligand>
</feature>
<feature type="binding site" evidence="8 20 21">
    <location>
        <position position="702"/>
    </location>
    <ligand>
        <name>Mg(2+)</name>
        <dbReference type="ChEBI" id="CHEBI:18420"/>
        <label>1</label>
        <note>catalytic</note>
    </ligand>
</feature>
<feature type="binding site" evidence="8 20 21">
    <location>
        <position position="703"/>
    </location>
    <ligand>
        <name>Mg(2+)</name>
        <dbReference type="ChEBI" id="CHEBI:18420"/>
        <label>1</label>
        <note>catalytic</note>
    </ligand>
</feature>
<feature type="binding site" evidence="7 8 20 23">
    <location>
        <position position="734"/>
    </location>
    <ligand>
        <name>dTTP</name>
        <dbReference type="ChEBI" id="CHEBI:37568"/>
        <note>substrate</note>
    </ligand>
</feature>
<feature type="binding site" evidence="7 8 20 21">
    <location>
        <position position="737"/>
    </location>
    <ligand>
        <name>dTTP</name>
        <dbReference type="ChEBI" id="CHEBI:37568"/>
        <note>substrate</note>
    </ligand>
</feature>
<feature type="mutagenesis site" description="Loss of endonuclease activity and reduced transposition efficiency." evidence="10">
    <original>N</original>
    <variation>A</variation>
    <location>
        <position position="14"/>
    </location>
</feature>
<feature type="mutagenesis site" description="Loss of endonuclease activity." evidence="10">
    <original>E</original>
    <variation>A</variation>
    <location>
        <position position="43"/>
    </location>
</feature>
<feature type="mutagenesis site" description="Loss of endonuclease activity and reduced transposition efficiency. Reduced transposition efficiency; when associated with A-147." evidence="3 5 10">
    <original>D</original>
    <variation>A</variation>
    <location>
        <position position="145"/>
    </location>
</feature>
<feature type="mutagenesis site" description="Reduced transposition efficiency; when associated with A-145." evidence="3">
    <original>N</original>
    <variation>A</variation>
    <location>
        <position position="147"/>
    </location>
</feature>
<feature type="mutagenesis site" description="Reduced DNA nicking activity and reduced transposition efficiency." evidence="3">
    <original>R</original>
    <variation>A</variation>
    <location>
        <position position="155"/>
    </location>
</feature>
<feature type="mutagenesis site" description="Reduced transposition efficiency." evidence="3">
    <original>T</original>
    <variation>V</variation>
    <location>
        <position position="192"/>
    </location>
</feature>
<feature type="mutagenesis site" description="Reduced DNA nicking activity and reduced transposition efficiency." evidence="3">
    <original>S</original>
    <variation>A</variation>
    <location>
        <position position="202"/>
    </location>
</feature>
<feature type="mutagenesis site" description="Reduced DNA nicking activity and reduced transposition efficiency." evidence="3">
    <original>I</original>
    <variation>Y</variation>
    <location>
        <position position="204"/>
    </location>
</feature>
<feature type="mutagenesis site" description="Loss of endonuclease activity and reduced transposition efficiency." evidence="10">
    <original>D</original>
    <variation>G</variation>
    <location>
        <position position="205"/>
    </location>
</feature>
<feature type="mutagenesis site" description="Increased endonuclease activity." evidence="5">
    <original>Y</original>
    <variation>K</variation>
    <location>
        <position position="226"/>
    </location>
</feature>
<feature type="mutagenesis site" description="Loss of endonuclease activity and reduced transposition efficiency." evidence="3 10">
    <original>H</original>
    <variation>A</variation>
    <location>
        <position position="230"/>
    </location>
</feature>
<feature type="mutagenesis site" description="Reduces transposition efficiency." evidence="8">
    <original>A</original>
    <variation>M</variation>
    <location>
        <position position="701"/>
    </location>
</feature>
<feature type="mutagenesis site" description="Reduced transposition efficiency." evidence="10">
    <original>D</original>
    <variation>Y</variation>
    <location>
        <position position="703"/>
    </location>
</feature>
<feature type="mutagenesis site" description="No effect on binding to RNA; when associated with R-1134, R-1143 and R-1147." evidence="4">
    <original>C</original>
    <variation>R</variation>
    <location>
        <position position="1130"/>
    </location>
</feature>
<feature type="mutagenesis site" description="No effect on binding to RNA; when associated with R-1130, R-1143 and R-1147." evidence="4">
    <original>C</original>
    <variation>R</variation>
    <location>
        <position position="1134"/>
    </location>
</feature>
<feature type="mutagenesis site" description="No effect on binding to RNA; when associated with R-1130, R-1134 and R-1147." evidence="4">
    <original>C</original>
    <variation>R</variation>
    <location>
        <position position="1143"/>
    </location>
</feature>
<feature type="mutagenesis site" description="No effect on binding to RNA; when associated with R-1130, R-1134 and R-1143." evidence="4">
    <original>C</original>
    <variation>R</variation>
    <location>
        <position position="1147"/>
    </location>
</feature>
<feature type="strand" evidence="24">
    <location>
        <begin position="8"/>
        <end position="14"/>
    </location>
</feature>
<feature type="helix" evidence="24">
    <location>
        <begin position="21"/>
        <end position="34"/>
    </location>
</feature>
<feature type="strand" evidence="24">
    <location>
        <begin position="37"/>
        <end position="42"/>
    </location>
</feature>
<feature type="helix" evidence="24">
    <location>
        <begin position="51"/>
        <end position="53"/>
    </location>
</feature>
<feature type="strand" evidence="24">
    <location>
        <begin position="61"/>
        <end position="65"/>
    </location>
</feature>
<feature type="strand" evidence="24">
    <location>
        <begin position="68"/>
        <end position="71"/>
    </location>
</feature>
<feature type="strand" evidence="24">
    <location>
        <begin position="74"/>
        <end position="78"/>
    </location>
</feature>
<feature type="strand" evidence="24">
    <location>
        <begin position="85"/>
        <end position="91"/>
    </location>
</feature>
<feature type="strand" evidence="24">
    <location>
        <begin position="95"/>
        <end position="104"/>
    </location>
</feature>
<feature type="strand" evidence="24">
    <location>
        <begin position="107"/>
        <end position="115"/>
    </location>
</feature>
<feature type="strand" evidence="24">
    <location>
        <begin position="118"/>
        <end position="120"/>
    </location>
</feature>
<feature type="helix" evidence="24">
    <location>
        <begin position="121"/>
        <end position="131"/>
    </location>
</feature>
<feature type="turn" evidence="24">
    <location>
        <begin position="132"/>
        <end position="135"/>
    </location>
</feature>
<feature type="strand" evidence="24">
    <location>
        <begin position="140"/>
        <end position="145"/>
    </location>
</feature>
<feature type="helix" evidence="24">
    <location>
        <begin position="152"/>
        <end position="154"/>
    </location>
</feature>
<feature type="strand" evidence="25">
    <location>
        <begin position="155"/>
        <end position="157"/>
    </location>
</feature>
<feature type="helix" evidence="24">
    <location>
        <begin position="163"/>
        <end position="174"/>
    </location>
</feature>
<feature type="strand" evidence="24">
    <location>
        <begin position="177"/>
        <end position="179"/>
    </location>
</feature>
<feature type="helix" evidence="24">
    <location>
        <begin position="180"/>
        <end position="184"/>
    </location>
</feature>
<feature type="strand" evidence="24">
    <location>
        <begin position="192"/>
        <end position="195"/>
    </location>
</feature>
<feature type="turn" evidence="24">
    <location>
        <begin position="196"/>
        <end position="199"/>
    </location>
</feature>
<feature type="strand" evidence="24">
    <location>
        <begin position="200"/>
        <end position="202"/>
    </location>
</feature>
<feature type="strand" evidence="24">
    <location>
        <begin position="205"/>
        <end position="210"/>
    </location>
</feature>
<feature type="helix" evidence="24">
    <location>
        <begin position="211"/>
        <end position="216"/>
    </location>
</feature>
<feature type="strand" evidence="24">
    <location>
        <begin position="217"/>
        <end position="223"/>
    </location>
</feature>
<feature type="strand" evidence="24">
    <location>
        <begin position="226"/>
        <end position="230"/>
    </location>
</feature>
<feature type="strand" evidence="24">
    <location>
        <begin position="232"/>
        <end position="237"/>
    </location>
</feature>
<feature type="helix" evidence="26">
    <location>
        <begin position="255"/>
        <end position="258"/>
    </location>
</feature>
<feature type="helix" evidence="26">
    <location>
        <begin position="260"/>
        <end position="276"/>
    </location>
</feature>
<feature type="strand" evidence="26">
    <location>
        <begin position="277"/>
        <end position="282"/>
    </location>
</feature>
<feature type="helix" evidence="26">
    <location>
        <begin position="284"/>
        <end position="303"/>
    </location>
</feature>
<feature type="helix" evidence="28">
    <location>
        <begin position="312"/>
        <end position="330"/>
    </location>
</feature>
<feature type="helix" evidence="28">
    <location>
        <begin position="334"/>
        <end position="368"/>
    </location>
</feature>
<feature type="strand" evidence="28">
    <location>
        <begin position="370"/>
        <end position="374"/>
    </location>
</feature>
<feature type="helix" evidence="28">
    <location>
        <begin position="375"/>
        <end position="381"/>
    </location>
</feature>
<feature type="strand" evidence="28">
    <location>
        <begin position="396"/>
        <end position="398"/>
    </location>
</feature>
<feature type="helix" evidence="26">
    <location>
        <begin position="404"/>
        <end position="418"/>
    </location>
</feature>
<feature type="helix" evidence="26">
    <location>
        <begin position="426"/>
        <end position="435"/>
    </location>
</feature>
<feature type="helix" evidence="26">
    <location>
        <begin position="443"/>
        <end position="450"/>
    </location>
</feature>
<feature type="helix" evidence="26">
    <location>
        <begin position="455"/>
        <end position="463"/>
    </location>
</feature>
<feature type="strand" evidence="28">
    <location>
        <begin position="473"/>
        <end position="475"/>
    </location>
</feature>
<feature type="helix" evidence="26">
    <location>
        <begin position="478"/>
        <end position="483"/>
    </location>
</feature>
<feature type="helix" evidence="26">
    <location>
        <begin position="485"/>
        <end position="502"/>
    </location>
</feature>
<feature type="helix" evidence="26">
    <location>
        <begin position="507"/>
        <end position="510"/>
    </location>
</feature>
<feature type="strand" evidence="26">
    <location>
        <begin position="512"/>
        <end position="518"/>
    </location>
</feature>
<feature type="strand" evidence="27">
    <location>
        <begin position="524"/>
        <end position="526"/>
    </location>
</feature>
<feature type="helix" evidence="26">
    <location>
        <begin position="527"/>
        <end position="529"/>
    </location>
</feature>
<feature type="strand" evidence="26">
    <location>
        <begin position="530"/>
        <end position="536"/>
    </location>
</feature>
<feature type="helix" evidence="26">
    <location>
        <begin position="538"/>
        <end position="552"/>
    </location>
</feature>
<feature type="helix" evidence="26">
    <location>
        <begin position="555"/>
        <end position="558"/>
    </location>
</feature>
<feature type="strand" evidence="27">
    <location>
        <begin position="561"/>
        <end position="563"/>
    </location>
</feature>
<feature type="helix" evidence="26">
    <location>
        <begin position="573"/>
        <end position="588"/>
    </location>
</feature>
<feature type="strand" evidence="26">
    <location>
        <begin position="594"/>
        <end position="599"/>
    </location>
</feature>
<feature type="strand" evidence="28">
    <location>
        <begin position="601"/>
        <end position="603"/>
    </location>
</feature>
<feature type="helix" evidence="26">
    <location>
        <begin position="604"/>
        <end position="607"/>
    </location>
</feature>
<feature type="helix" evidence="26">
    <location>
        <begin position="610"/>
        <end position="619"/>
    </location>
</feature>
<feature type="helix" evidence="26">
    <location>
        <begin position="624"/>
        <end position="633"/>
    </location>
</feature>
<feature type="strand" evidence="26">
    <location>
        <begin position="638"/>
        <end position="643"/>
    </location>
</feature>
<feature type="helix" evidence="26">
    <location>
        <begin position="664"/>
        <end position="681"/>
    </location>
</feature>
<feature type="strand" evidence="27">
    <location>
        <begin position="683"/>
        <end position="685"/>
    </location>
</feature>
<feature type="strand" evidence="26">
    <location>
        <begin position="688"/>
        <end position="690"/>
    </location>
</feature>
<feature type="strand" evidence="26">
    <location>
        <begin position="693"/>
        <end position="695"/>
    </location>
</feature>
<feature type="strand" evidence="26">
    <location>
        <begin position="697"/>
        <end position="700"/>
    </location>
</feature>
<feature type="strand" evidence="26">
    <location>
        <begin position="703"/>
        <end position="710"/>
    </location>
</feature>
<feature type="helix" evidence="26">
    <location>
        <begin position="711"/>
        <end position="729"/>
    </location>
</feature>
<feature type="turn" evidence="26">
    <location>
        <begin position="735"/>
        <end position="737"/>
    </location>
</feature>
<feature type="strand" evidence="26">
    <location>
        <begin position="739"/>
        <end position="743"/>
    </location>
</feature>
<feature type="helix" evidence="26">
    <location>
        <begin position="747"/>
        <end position="754"/>
    </location>
</feature>
<feature type="strand" evidence="26">
    <location>
        <begin position="758"/>
        <end position="761"/>
    </location>
</feature>
<feature type="strand" evidence="26">
    <location>
        <begin position="763"/>
        <end position="768"/>
    </location>
</feature>
<feature type="strand" evidence="26">
    <location>
        <begin position="771"/>
        <end position="776"/>
    </location>
</feature>
<feature type="helix" evidence="26">
    <location>
        <begin position="777"/>
        <end position="779"/>
    </location>
</feature>
<feature type="helix" evidence="26">
    <location>
        <begin position="780"/>
        <end position="797"/>
    </location>
</feature>
<feature type="turn" evidence="28">
    <location>
        <begin position="798"/>
        <end position="801"/>
    </location>
</feature>
<feature type="helix" evidence="26">
    <location>
        <begin position="806"/>
        <end position="827"/>
    </location>
</feature>
<feature type="helix" evidence="26">
    <location>
        <begin position="834"/>
        <end position="849"/>
    </location>
</feature>
<feature type="helix" evidence="28">
    <location>
        <begin position="858"/>
        <end position="862"/>
    </location>
</feature>
<feature type="helix" evidence="28">
    <location>
        <begin position="865"/>
        <end position="867"/>
    </location>
</feature>
<feature type="helix" evidence="26">
    <location>
        <begin position="875"/>
        <end position="892"/>
    </location>
</feature>
<feature type="helix" evidence="26">
    <location>
        <begin position="898"/>
        <end position="901"/>
    </location>
</feature>
<feature type="turn" evidence="28">
    <location>
        <begin position="909"/>
        <end position="912"/>
    </location>
</feature>
<feature type="strand" evidence="26">
    <location>
        <begin position="916"/>
        <end position="918"/>
    </location>
</feature>
<feature type="helix" evidence="26">
    <location>
        <begin position="933"/>
        <end position="946"/>
    </location>
</feature>
<feature type="strand" evidence="28">
    <location>
        <begin position="951"/>
        <end position="953"/>
    </location>
</feature>
<feature type="strand" evidence="26">
    <location>
        <begin position="958"/>
        <end position="961"/>
    </location>
</feature>
<feature type="helix" evidence="26">
    <location>
        <begin position="962"/>
        <end position="965"/>
    </location>
</feature>
<feature type="turn" evidence="26">
    <location>
        <begin position="966"/>
        <end position="968"/>
    </location>
</feature>
<feature type="helix" evidence="26">
    <location>
        <begin position="971"/>
        <end position="981"/>
    </location>
</feature>
<feature type="helix" evidence="26">
    <location>
        <begin position="985"/>
        <end position="988"/>
    </location>
</feature>
<feature type="helix" evidence="26">
    <location>
        <begin position="991"/>
        <end position="993"/>
    </location>
</feature>
<feature type="turn" evidence="26">
    <location>
        <begin position="994"/>
        <end position="996"/>
    </location>
</feature>
<feature type="helix" evidence="26">
    <location>
        <begin position="999"/>
        <end position="1004"/>
    </location>
</feature>
<feature type="helix" evidence="26">
    <location>
        <begin position="1005"/>
        <end position="1007"/>
    </location>
</feature>
<feature type="helix" evidence="26">
    <location>
        <begin position="1010"/>
        <end position="1021"/>
    </location>
</feature>
<feature type="helix" evidence="26">
    <location>
        <begin position="1023"/>
        <end position="1029"/>
    </location>
</feature>
<feature type="helix" evidence="26">
    <location>
        <begin position="1035"/>
        <end position="1041"/>
    </location>
</feature>
<feature type="helix" evidence="26">
    <location>
        <begin position="1049"/>
        <end position="1061"/>
    </location>
</feature>
<feature type="helix" evidence="28">
    <location>
        <begin position="1068"/>
        <end position="1075"/>
    </location>
</feature>
<feature type="helix" evidence="28">
    <location>
        <begin position="1082"/>
        <end position="1094"/>
    </location>
</feature>
<feature type="helix" evidence="28">
    <location>
        <begin position="1099"/>
        <end position="1109"/>
    </location>
</feature>
<feature type="helix" evidence="28">
    <location>
        <begin position="1116"/>
        <end position="1123"/>
    </location>
</feature>
<feature type="helix" evidence="28">
    <location>
        <begin position="1140"/>
        <end position="1144"/>
    </location>
</feature>
<feature type="turn" evidence="28">
    <location>
        <begin position="1148"/>
        <end position="1150"/>
    </location>
</feature>
<feature type="helix" evidence="28">
    <location>
        <begin position="1151"/>
        <end position="1163"/>
    </location>
</feature>
<feature type="helix" evidence="28">
    <location>
        <begin position="1173"/>
        <end position="1177"/>
    </location>
</feature>
<feature type="helix" evidence="28">
    <location>
        <begin position="1187"/>
        <end position="1206"/>
    </location>
</feature>
<feature type="strand" evidence="28">
    <location>
        <begin position="1208"/>
        <end position="1212"/>
    </location>
</feature>
<feature type="helix" evidence="28">
    <location>
        <begin position="1216"/>
        <end position="1237"/>
    </location>
</feature>
<feature type="helix" evidence="28">
    <location>
        <begin position="1240"/>
        <end position="1257"/>
    </location>
</feature>
<feature type="helix" evidence="28">
    <location>
        <begin position="1260"/>
        <end position="1266"/>
    </location>
</feature>
<feature type="strand" evidence="28">
    <location>
        <begin position="1271"/>
        <end position="1273"/>
    </location>
</feature>
<name>LORF2_HUMAN</name>
<evidence type="ECO:0000250" key="1">
    <source>
        <dbReference type="UniProtKB" id="P11369"/>
    </source>
</evidence>
<evidence type="ECO:0000255" key="2">
    <source>
        <dbReference type="PROSITE-ProRule" id="PRU00405"/>
    </source>
</evidence>
<evidence type="ECO:0000269" key="3">
    <source>
    </source>
</evidence>
<evidence type="ECO:0000269" key="4">
    <source>
    </source>
</evidence>
<evidence type="ECO:0000269" key="5">
    <source>
    </source>
</evidence>
<evidence type="ECO:0000269" key="6">
    <source>
    </source>
</evidence>
<evidence type="ECO:0000269" key="7">
    <source>
    </source>
</evidence>
<evidence type="ECO:0000269" key="8">
    <source>
    </source>
</evidence>
<evidence type="ECO:0000269" key="9">
    <source>
    </source>
</evidence>
<evidence type="ECO:0000269" key="10">
    <source>
    </source>
</evidence>
<evidence type="ECO:0000269" key="11">
    <source>
    </source>
</evidence>
<evidence type="ECO:0000303" key="12">
    <source>
    </source>
</evidence>
<evidence type="ECO:0000303" key="13">
    <source>
    </source>
</evidence>
<evidence type="ECO:0007744" key="14">
    <source>
        <dbReference type="PDB" id="1VYB"/>
    </source>
</evidence>
<evidence type="ECO:0007744" key="15">
    <source>
        <dbReference type="PDB" id="2V0R"/>
    </source>
</evidence>
<evidence type="ECO:0007744" key="16">
    <source>
        <dbReference type="PDB" id="2V0S"/>
    </source>
</evidence>
<evidence type="ECO:0007744" key="17">
    <source>
        <dbReference type="PDB" id="7N8K"/>
    </source>
</evidence>
<evidence type="ECO:0007744" key="18">
    <source>
        <dbReference type="PDB" id="7N8S"/>
    </source>
</evidence>
<evidence type="ECO:0007744" key="19">
    <source>
        <dbReference type="PDB" id="7N94"/>
    </source>
</evidence>
<evidence type="ECO:0007744" key="20">
    <source>
        <dbReference type="PDB" id="8C8J"/>
    </source>
</evidence>
<evidence type="ECO:0007744" key="21">
    <source>
        <dbReference type="PDB" id="8SXT"/>
    </source>
</evidence>
<evidence type="ECO:0007744" key="22">
    <source>
        <dbReference type="PDB" id="8SXU"/>
    </source>
</evidence>
<evidence type="ECO:0007744" key="23">
    <source>
        <dbReference type="PDB" id="8UW3"/>
    </source>
</evidence>
<evidence type="ECO:0007829" key="24">
    <source>
        <dbReference type="PDB" id="1VYB"/>
    </source>
</evidence>
<evidence type="ECO:0007829" key="25">
    <source>
        <dbReference type="PDB" id="7N94"/>
    </source>
</evidence>
<evidence type="ECO:0007829" key="26">
    <source>
        <dbReference type="PDB" id="8C8J"/>
    </source>
</evidence>
<evidence type="ECO:0007829" key="27">
    <source>
        <dbReference type="PDB" id="8SXT"/>
    </source>
</evidence>
<evidence type="ECO:0007829" key="28">
    <source>
        <dbReference type="PDB" id="8UW3"/>
    </source>
</evidence>
<sequence>MTGSNSHITILTLNVNGLNSPIKRHRLASWIKSQDPSVCCIQETHLTCRDTHRLKIKGWRKIYQANGKQKKAGVAILVSDKTDFKPTKIKRDKEGHYIMVKGSIQQEELTILNIYAPNTGAPRFIKQVLSDLQRDLDSHTLIMGDFNTPLSILDRSTRQKVNKDTQELNSALHQTDLIDIYRTLHPKSTEYTFFSAPHHTYSKIDHIVGSKALLSKCKRTEIITNYLSDHSAIKLELRIKNLTQSRSTTWKLNNLLLNDYWVHNEMKAEIKMFFETNENKDTTYQNLWDAFKAVCRGKFIALNAYKRKQERSKIDTLTSQLKELEKQEQTHSKASRRQEITKIRAELKEIETQKTLQKINESRSWFFERINKIDRPLARLIKKKREKNQIDTIKNDKGDITTDPTEIQTTIREYYKHLYANKLENLEEMDTFLDTYTLPRLNQEEVESLNRPITGSEIVAIINSLPTKKSPGPDGFTAEFYQRYKEELVPFLLKLFQSIEKEGILPNSFYEASIILIPKPGRDTTKKENFRPISLMNIDAKILNKILANRIQQHIKKLIHHDQVGFIPGMQGWFNIRKSINVIQHINRAKDKNHVIISIDAEKAFDKIQQPFMLKTLNKLGIDGMYLKIIRAIYDKPTANIILNGQKLEAFPLKTGTRQGCPLSPLLFNIVLEVLARAIRQEKEIKGIQLGKEEVKLSLFADDMIVYLENPIVSAQNLLKLISNFSKVSGYKINVQKSQAFLYNNNRQTESQIMGELPFTIASKRIKYLGIQLTRDVKDLFKENYKPLLKEIKEDTNKWKNIPCSWVGRINIVKMAILPKVIYRFNAIPIKLPMTFFTELEKTTLKFIWNQKRARIAKSILSQKNKAGGITLPDFKLYYKATVTKTAWYWYQNRDIDQWNRTEPSEIMPHIYNYLIFDKPEKNKQWGKDSLLNKWCWENWLAICRKLKLDPFLTPYTKINSRWIKDLNVKPKTIKTLEENLGITIQDIGVGKDFMSKTPKAMATKDKIDKWDLIKLKSFCTAKETTIRVNRQPTTWEKIFATYSSDKGLISRIYNELKQIYKKKTNNPIKKWAKDMNRHFSKEDIYAAKKHMKKCSSSLAIREMQIKTTMRYHLTPVRMAIIKKSGNNRCWRGCGEIGTLVHCWWDCKLVQPLWKSVWRFLRDLELEIPFDPAIPLLGIYPKDYKSCCYKDTCTRMFIAALFTIAKTWNQPNCPTMIDWIKKMWHIYTMEYYAAIKNDEFISFVGTWMKLETIILSKLSQEQKTKHRIFSLIGGN</sequence>
<organism>
    <name type="scientific">Homo sapiens</name>
    <name type="common">Human</name>
    <dbReference type="NCBI Taxonomy" id="9606"/>
    <lineage>
        <taxon>Eukaryota</taxon>
        <taxon>Metazoa</taxon>
        <taxon>Chordata</taxon>
        <taxon>Craniata</taxon>
        <taxon>Vertebrata</taxon>
        <taxon>Euteleostomi</taxon>
        <taxon>Mammalia</taxon>
        <taxon>Eutheria</taxon>
        <taxon>Euarchontoglires</taxon>
        <taxon>Primates</taxon>
        <taxon>Haplorrhini</taxon>
        <taxon>Catarrhini</taxon>
        <taxon>Hominidae</taxon>
        <taxon>Homo</taxon>
    </lineage>
</organism>
<dbReference type="EC" id="2.7.7.49" evidence="7 8 9 11"/>
<dbReference type="EC" id="3.1.21.-" evidence="3 5 7 8 10"/>
<dbReference type="EMBL" id="U93569">
    <property type="protein sequence ID" value="AAC51271.1"/>
    <property type="molecule type" value="Genomic_DNA"/>
</dbReference>
<dbReference type="PIR" id="B28096">
    <property type="entry name" value="B28096"/>
</dbReference>
<dbReference type="PIR" id="S23650">
    <property type="entry name" value="S23650"/>
</dbReference>
<dbReference type="PDB" id="1VYB">
    <property type="method" value="X-ray"/>
    <property type="resolution" value="1.80 A"/>
    <property type="chains" value="A/B=1-238"/>
</dbReference>
<dbReference type="PDB" id="2V0R">
    <property type="method" value="X-ray"/>
    <property type="resolution" value="2.30 A"/>
    <property type="chains" value="A/B=1-238"/>
</dbReference>
<dbReference type="PDB" id="2V0S">
    <property type="method" value="X-ray"/>
    <property type="resolution" value="1.80 A"/>
    <property type="chains" value="A=1-238"/>
</dbReference>
<dbReference type="PDB" id="7N8K">
    <property type="method" value="X-ray"/>
    <property type="resolution" value="2.01 A"/>
    <property type="chains" value="A/B=1-238"/>
</dbReference>
<dbReference type="PDB" id="7N8S">
    <property type="method" value="X-ray"/>
    <property type="resolution" value="2.79 A"/>
    <property type="chains" value="A=1-238"/>
</dbReference>
<dbReference type="PDB" id="7N94">
    <property type="method" value="X-ray"/>
    <property type="resolution" value="2.85 A"/>
    <property type="chains" value="A/B=1-238"/>
</dbReference>
<dbReference type="PDB" id="8C8J">
    <property type="method" value="X-ray"/>
    <property type="resolution" value="2.10 A"/>
    <property type="chains" value="A=238-1061"/>
</dbReference>
<dbReference type="PDB" id="8SP5">
    <property type="method" value="X-ray"/>
    <property type="resolution" value="2.23 A"/>
    <property type="chains" value="A/B=1-239"/>
</dbReference>
<dbReference type="PDB" id="8SP7">
    <property type="method" value="X-ray"/>
    <property type="resolution" value="1.83 A"/>
    <property type="chains" value="A=1-239"/>
</dbReference>
<dbReference type="PDB" id="8SXT">
    <property type="method" value="EM"/>
    <property type="resolution" value="3.30 A"/>
    <property type="chains" value="A=1-1275"/>
</dbReference>
<dbReference type="PDB" id="8SXU">
    <property type="method" value="EM"/>
    <property type="resolution" value="3.66 A"/>
    <property type="chains" value="A=1-1275"/>
</dbReference>
<dbReference type="PDB" id="8UW3">
    <property type="method" value="EM"/>
    <property type="resolution" value="3.20 A"/>
    <property type="chains" value="A=1-1275"/>
</dbReference>
<dbReference type="PDB" id="9HDO">
    <property type="method" value="EM"/>
    <property type="resolution" value="2.30 A"/>
    <property type="chains" value="A=1-1275"/>
</dbReference>
<dbReference type="PDB" id="9HDP">
    <property type="method" value="EM"/>
    <property type="resolution" value="2.50 A"/>
    <property type="chains" value="A=1-1275"/>
</dbReference>
<dbReference type="PDB" id="9HDQ">
    <property type="method" value="EM"/>
    <property type="resolution" value="2.45 A"/>
    <property type="chains" value="A=1-1275"/>
</dbReference>
<dbReference type="PDB" id="9HDR">
    <property type="method" value="EM"/>
    <property type="resolution" value="3.10 A"/>
    <property type="chains" value="A=1-1275"/>
</dbReference>
<dbReference type="PDBsum" id="1VYB"/>
<dbReference type="PDBsum" id="2V0R"/>
<dbReference type="PDBsum" id="2V0S"/>
<dbReference type="PDBsum" id="7N8K"/>
<dbReference type="PDBsum" id="7N8S"/>
<dbReference type="PDBsum" id="7N94"/>
<dbReference type="PDBsum" id="8C8J"/>
<dbReference type="PDBsum" id="8SP5"/>
<dbReference type="PDBsum" id="8SP7"/>
<dbReference type="PDBsum" id="8SXT"/>
<dbReference type="PDBsum" id="8SXU"/>
<dbReference type="PDBsum" id="8UW3"/>
<dbReference type="PDBsum" id="9HDO"/>
<dbReference type="PDBsum" id="9HDP"/>
<dbReference type="PDBsum" id="9HDQ"/>
<dbReference type="PDBsum" id="9HDR"/>
<dbReference type="EMDB" id="EMD-40858"/>
<dbReference type="EMDB" id="EMD-40859"/>
<dbReference type="EMDB" id="EMD-42637"/>
<dbReference type="EMDB" id="EMD-52070"/>
<dbReference type="EMDB" id="EMD-52071"/>
<dbReference type="EMDB" id="EMD-52072"/>
<dbReference type="EMDB" id="EMD-52073"/>
<dbReference type="SMR" id="O00370"/>
<dbReference type="FunCoup" id="O00370">
    <property type="interactions" value="1"/>
</dbReference>
<dbReference type="IntAct" id="O00370">
    <property type="interactions" value="3"/>
</dbReference>
<dbReference type="GlyGen" id="O00370">
    <property type="glycosylation" value="1 site, 1 O-linked glycan (1 site)"/>
</dbReference>
<dbReference type="iPTMnet" id="O00370"/>
<dbReference type="PhosphoSitePlus" id="O00370"/>
<dbReference type="BioMuta" id="-"/>
<dbReference type="jPOST" id="O00370"/>
<dbReference type="MassIVE" id="O00370"/>
<dbReference type="neXtProt" id="NX_O00370"/>
<dbReference type="InParanoid" id="O00370"/>
<dbReference type="PAN-GO" id="O00370">
    <property type="GO annotations" value="0 GO annotations based on evolutionary models"/>
</dbReference>
<dbReference type="PathwayCommons" id="O00370"/>
<dbReference type="EvolutionaryTrace" id="O00370"/>
<dbReference type="Pharos" id="O00370">
    <property type="development level" value="Tbio"/>
</dbReference>
<dbReference type="Proteomes" id="UP000005640">
    <property type="component" value="Unplaced"/>
</dbReference>
<dbReference type="RNAct" id="O00370">
    <property type="molecule type" value="protein"/>
</dbReference>
<dbReference type="GO" id="GO:0046872">
    <property type="term" value="F:metal ion binding"/>
    <property type="evidence" value="ECO:0007669"/>
    <property type="project" value="UniProtKB-KW"/>
</dbReference>
<dbReference type="GO" id="GO:0003723">
    <property type="term" value="F:RNA binding"/>
    <property type="evidence" value="ECO:0007669"/>
    <property type="project" value="UniProtKB-KW"/>
</dbReference>
<dbReference type="GO" id="GO:0003964">
    <property type="term" value="F:RNA-directed DNA polymerase activity"/>
    <property type="evidence" value="ECO:0000314"/>
    <property type="project" value="UniProtKB"/>
</dbReference>
<dbReference type="GO" id="GO:0009036">
    <property type="term" value="F:type II site-specific deoxyribonuclease activity"/>
    <property type="evidence" value="ECO:0000314"/>
    <property type="project" value="UniProtKB"/>
</dbReference>
<dbReference type="GO" id="GO:0006310">
    <property type="term" value="P:DNA recombination"/>
    <property type="evidence" value="ECO:0007669"/>
    <property type="project" value="UniProtKB-KW"/>
</dbReference>
<dbReference type="GO" id="GO:0090304">
    <property type="term" value="P:nucleic acid metabolic process"/>
    <property type="evidence" value="ECO:0000314"/>
    <property type="project" value="UniProtKB"/>
</dbReference>
<dbReference type="GO" id="GO:0032197">
    <property type="term" value="P:retrotransposition"/>
    <property type="evidence" value="ECO:0000314"/>
    <property type="project" value="UniProtKB"/>
</dbReference>
<dbReference type="CDD" id="cd09076">
    <property type="entry name" value="L1-EN"/>
    <property type="match status" value="1"/>
</dbReference>
<dbReference type="CDD" id="cd01650">
    <property type="entry name" value="RT_nLTR_like"/>
    <property type="match status" value="1"/>
</dbReference>
<dbReference type="FunFam" id="3.60.10.10:FF:000056">
    <property type="entry name" value="LINE-1 reverse transcriptase-like protein"/>
    <property type="match status" value="1"/>
</dbReference>
<dbReference type="Gene3D" id="3.60.10.10">
    <property type="entry name" value="Endonuclease/exonuclease/phosphatase"/>
    <property type="match status" value="1"/>
</dbReference>
<dbReference type="InterPro" id="IPR043502">
    <property type="entry name" value="DNA/RNA_pol_sf"/>
</dbReference>
<dbReference type="InterPro" id="IPR036691">
    <property type="entry name" value="Endo/exonu/phosph_ase_sf"/>
</dbReference>
<dbReference type="InterPro" id="IPR005135">
    <property type="entry name" value="Endo/exonuclease/phosphatase"/>
</dbReference>
<dbReference type="InterPro" id="IPR000477">
    <property type="entry name" value="RT_dom"/>
</dbReference>
<dbReference type="PANTHER" id="PTHR19446">
    <property type="entry name" value="REVERSE TRANSCRIPTASES"/>
    <property type="match status" value="1"/>
</dbReference>
<dbReference type="Pfam" id="PF03372">
    <property type="entry name" value="Exo_endo_phos"/>
    <property type="match status" value="1"/>
</dbReference>
<dbReference type="Pfam" id="PF00078">
    <property type="entry name" value="RVT_1"/>
    <property type="match status" value="1"/>
</dbReference>
<dbReference type="SUPFAM" id="SSF56672">
    <property type="entry name" value="DNA/RNA polymerases"/>
    <property type="match status" value="1"/>
</dbReference>
<dbReference type="SUPFAM" id="SSF56219">
    <property type="entry name" value="DNase I-like"/>
    <property type="match status" value="1"/>
</dbReference>
<dbReference type="PROSITE" id="PS50878">
    <property type="entry name" value="RT_POL"/>
    <property type="match status" value="1"/>
</dbReference>
<reference key="1">
    <citation type="journal article" date="1997" name="Nat. Genet.">
        <title>Many human L1 elements are capable of retrotransposition.</title>
        <authorList>
            <person name="Sassaman D.M."/>
            <person name="Dombroski B.A."/>
            <person name="Moran J.V."/>
            <person name="Kimberland M.L."/>
            <person name="Naas T.P."/>
            <person name="DeBerardinis R.J."/>
            <person name="Gabriel A."/>
            <person name="Swergold G.D."/>
            <person name="Kazazian H.H. Jr."/>
        </authorList>
    </citation>
    <scope>NUCLEOTIDE SEQUENCE [GENOMIC DNA]</scope>
    <scope>FUNCTION</scope>
    <scope>CATALYTIC ACTIVITY</scope>
</reference>
<reference key="2">
    <citation type="journal article" date="1994" name="Mol. Cell. Biol.">
        <title>An in vivo assay for the reverse transcriptase of human retrotransposon L1 in Saccharomyces cerevisiae.</title>
        <authorList>
            <person name="Dombroski B.A."/>
            <person name="Feng Q."/>
            <person name="Mathias S.L."/>
            <person name="Sassaman D.M."/>
            <person name="Scott A.F."/>
            <person name="Kazazian H.H. Jr."/>
            <person name="Boeke J.D."/>
        </authorList>
    </citation>
    <scope>FUNCTION AS A REVERSE TRANSCRIPTASE</scope>
    <scope>CATALYTIC ACTIVITY</scope>
</reference>
<reference key="3">
    <citation type="journal article" date="1996" name="Cell">
        <title>Human L1 retrotransposon encodes a conserved endonuclease required for retrotransposition.</title>
        <authorList>
            <person name="Feng Q."/>
            <person name="Moran J.V."/>
            <person name="Kazazian H.H. Jr."/>
            <person name="Boeke J.D."/>
        </authorList>
    </citation>
    <scope>FUNCTION AS AN ENDONUCLEASE</scope>
    <scope>CATALYTIC ACTIVITY</scope>
    <scope>MUTAGENESIS OF ASN-14; GLU-43; ASP-145; ASP-205; HIS-230 AND ASP-703</scope>
</reference>
<reference key="4">
    <citation type="journal article" date="2013" name="FEBS Open Bio">
        <title>The carboxy-terminal segment of the human LINE-1 ORF2 protein is involved in RNA binding.</title>
        <authorList>
            <person name="Piskareva O."/>
            <person name="Ernst C."/>
            <person name="Higgins N."/>
            <person name="Schmatchenko V."/>
        </authorList>
    </citation>
    <scope>DOMAIN</scope>
    <scope>RNA-BINDING REGION</scope>
    <scope>MUTAGENESIS OF CYS-1130; CYS-1134; CYS-1143 AND CYS-1147</scope>
</reference>
<reference key="5">
    <citation type="journal article" date="2022" name="Nat. Commun.">
        <title>Frequency and mechanisms of LINE-1 retrotransposon insertions at CRISPR/Cas9 sites.</title>
        <authorList>
            <person name="Tao J."/>
            <person name="Wang Q."/>
            <person name="Mendez-Dorantes C."/>
            <person name="Burns K.H."/>
            <person name="Chiarle R."/>
        </authorList>
    </citation>
    <scope>ROLE IN LINE-1 RETROTRANSPOSON INSERTION AT CRISPR/CAS9 SITES</scope>
</reference>
<reference key="6">
    <citation type="journal article" date="2023" name="Nat. Commun.">
        <title>Assessing and advancing the safety of CRISPR-Cas tools: from DNA to RNA editing.</title>
        <authorList>
            <person name="Tao J."/>
            <person name="Bauer D.E."/>
            <person name="Chiarle R."/>
        </authorList>
    </citation>
    <scope>REVIEW ON SAFETY OF GENOME EDITING TOOLS</scope>
</reference>
<reference evidence="14" key="7">
    <citation type="journal article" date="2004" name="Structure">
        <title>Crystal structure of the targeting endonuclease of the human LINE-1 retrotransposon.</title>
        <authorList>
            <person name="Weichenrieder O."/>
            <person name="Repanas K."/>
            <person name="Perrakis A."/>
        </authorList>
    </citation>
    <scope>X-RAY CRYSTALLOGRAPHY (1.80 ANGSTROMS) OF 1-238</scope>
</reference>
<reference evidence="15 16" key="8">
    <citation type="journal article" date="2007" name="Nucleic Acids Res.">
        <title>Determinants for DNA target structure selectivity of the human LINE-1 retrotransposon endonuclease.</title>
        <authorList>
            <person name="Repanas K."/>
            <person name="Zingler N."/>
            <person name="Layer L.E."/>
            <person name="Schumann G.G."/>
            <person name="Perrakis A."/>
            <person name="Weichenrieder O."/>
        </authorList>
    </citation>
    <scope>X-RAY CRYSTALLOGRAPHY (1.80 ANGSTROMS) OF 1-238 OF HAIRPIN LOOP VARIANTS</scope>
    <scope>FUNCTION</scope>
    <scope>CATALYTIC ACTIVITY</scope>
    <scope>DOMAIN</scope>
    <scope>MUTAGENESIS OF ASP-145; ASN-147; ARG-155; THR-192; SER-202; ILE-204 AND HIS-230</scope>
</reference>
<reference evidence="17 18 19" key="9">
    <citation type="journal article" date="2021" name="Nucleic Acids Res.">
        <title>Structural dissection of sequence recognition and catalytic mechanism of human LINE-1 endonuclease.</title>
        <authorList>
            <person name="Miller I."/>
            <person name="Totrov M."/>
            <person name="Korotchkina L."/>
            <person name="Kazyulkin D.N."/>
            <person name="Gudkov A.V."/>
            <person name="Korolev S."/>
        </authorList>
    </citation>
    <scope>X-RAY CRYSTALLOGRAPHY (2.01 ANGSTROMS) OF 1-238 OF MUTANT ALA-145/LYS-226 IN COMPLEX WITH DNA AND MG(2+)</scope>
    <scope>FUNCTION</scope>
    <scope>CATALYTIC ACTIVITY</scope>
    <scope>MUTAGENESIS OF ASP-145 AND TYR-226</scope>
</reference>
<reference evidence="23" key="10">
    <citation type="journal article" date="2024" name="Nature">
        <title>Template and target-site recognition by human LINE-1 in retrotransposition.</title>
        <authorList>
            <person name="Thawani A."/>
            <person name="Ariza A.J.F."/>
            <person name="Nogales E."/>
            <person name="Collins K."/>
        </authorList>
    </citation>
    <scope>STRUCTURE BY ELECTRON MICROSCOPY (3.20 ANGSTROMS) IN COMPLEX WITH DTTP AND DNA-RNA DUPLEX</scope>
    <scope>FUNCTION</scope>
    <scope>CATALYTIC ACTIVITY</scope>
    <scope>DOMAIN</scope>
</reference>
<reference evidence="20 21 22" key="11">
    <citation type="journal article" date="2024" name="Nature">
        <title>Structures, functions and adaptations of the human LINE-1 ORF2 protein.</title>
        <authorList>
            <person name="Baldwin E.T."/>
            <person name="van Eeuwen T."/>
            <person name="Hoyos D."/>
            <person name="Zalevsky A."/>
            <person name="Tchesnokov E.P."/>
            <person name="Sanchez R."/>
            <person name="Miller B.D."/>
            <person name="Di Stefano L.H."/>
            <person name="Ruiz F.X."/>
            <person name="Hancock M."/>
            <person name="Isik E."/>
            <person name="Mendez-Dorantes C."/>
            <person name="Walpole T."/>
            <person name="Nichols C."/>
            <person name="Wan P."/>
            <person name="Riento K."/>
            <person name="Halls-Kass R."/>
            <person name="Augustin M."/>
            <person name="Lammens A."/>
            <person name="Jestel A."/>
            <person name="Upla P."/>
            <person name="Xibinaku K."/>
            <person name="Congreve S."/>
            <person name="Hennink M."/>
            <person name="Rogala K.B."/>
            <person name="Schneider A.M."/>
            <person name="Fairman J.E."/>
            <person name="Christensen S.M."/>
            <person name="Desrosiers B."/>
            <person name="Bisacchi G.S."/>
            <person name="Saunders O.L."/>
            <person name="Hafeez N."/>
            <person name="Miao W."/>
            <person name="Kapeller R."/>
            <person name="Zaller D.M."/>
            <person name="Sali A."/>
            <person name="Weichenrieder O."/>
            <person name="Burns K.H."/>
            <person name="Gotte M."/>
            <person name="Rout M.P."/>
            <person name="Arnold E."/>
            <person name="Greenbaum B.D."/>
            <person name="Romero D.L."/>
            <person name="LaCava J."/>
            <person name="Taylor M.S."/>
        </authorList>
    </citation>
    <scope>STRUCTURE BY ELECTRON MICROSCOPY (3.30 ANGSTROMS) IN COMPLEXES WITH MG(2+); DTTP AND DNA-RNA DUPLEX</scope>
    <scope>X-RAY CRYSTALLOGRAPHY (2.10 ANGSTROMS) OF 238-1061 IN COMPLEX WITH MG(2+); DTTP AND DNA-RNA DUPLEX</scope>
    <scope>FUNCTION</scope>
    <scope>CATALYTIC ACTIVITY</scope>
    <scope>DOMAIN</scope>
    <scope>MUTAGENESIS OF ALA-701</scope>
</reference>
<keyword id="KW-0002">3D-structure</keyword>
<keyword id="KW-0233">DNA recombination</keyword>
<keyword id="KW-0255">Endonuclease</keyword>
<keyword id="KW-0378">Hydrolase</keyword>
<keyword id="KW-0460">Magnesium</keyword>
<keyword id="KW-0479">Metal-binding</keyword>
<keyword id="KW-0511">Multifunctional enzyme</keyword>
<keyword id="KW-0540">Nuclease</keyword>
<keyword id="KW-0548">Nucleotidyltransferase</keyword>
<keyword id="KW-1267">Proteomics identification</keyword>
<keyword id="KW-1185">Reference proteome</keyword>
<keyword id="KW-0694">RNA-binding</keyword>
<keyword id="KW-0695">RNA-directed DNA polymerase</keyword>
<keyword id="KW-0808">Transferase</keyword>
<proteinExistence type="evidence at protein level"/>